<name>RL13_SYNR3</name>
<gene>
    <name evidence="1" type="primary">rplM</name>
    <name evidence="1" type="synonym">rpl13</name>
    <name type="ordered locus">SynRCC307_2142</name>
</gene>
<accession>A5GVY6</accession>
<organism>
    <name type="scientific">Synechococcus sp. (strain RCC307)</name>
    <dbReference type="NCBI Taxonomy" id="316278"/>
    <lineage>
        <taxon>Bacteria</taxon>
        <taxon>Bacillati</taxon>
        <taxon>Cyanobacteriota</taxon>
        <taxon>Cyanophyceae</taxon>
        <taxon>Synechococcales</taxon>
        <taxon>Synechococcaceae</taxon>
        <taxon>Synechococcus</taxon>
    </lineage>
</organism>
<proteinExistence type="inferred from homology"/>
<dbReference type="EMBL" id="CT978603">
    <property type="protein sequence ID" value="CAK29045.1"/>
    <property type="molecule type" value="Genomic_DNA"/>
</dbReference>
<dbReference type="SMR" id="A5GVY6"/>
<dbReference type="STRING" id="316278.SynRCC307_2142"/>
<dbReference type="KEGG" id="syr:SynRCC307_2142"/>
<dbReference type="eggNOG" id="COG0102">
    <property type="taxonomic scope" value="Bacteria"/>
</dbReference>
<dbReference type="HOGENOM" id="CLU_082184_2_2_3"/>
<dbReference type="OrthoDB" id="9801330at2"/>
<dbReference type="Proteomes" id="UP000001115">
    <property type="component" value="Chromosome"/>
</dbReference>
<dbReference type="GO" id="GO:0022625">
    <property type="term" value="C:cytosolic large ribosomal subunit"/>
    <property type="evidence" value="ECO:0007669"/>
    <property type="project" value="TreeGrafter"/>
</dbReference>
<dbReference type="GO" id="GO:0003729">
    <property type="term" value="F:mRNA binding"/>
    <property type="evidence" value="ECO:0007669"/>
    <property type="project" value="TreeGrafter"/>
</dbReference>
<dbReference type="GO" id="GO:0003735">
    <property type="term" value="F:structural constituent of ribosome"/>
    <property type="evidence" value="ECO:0007669"/>
    <property type="project" value="InterPro"/>
</dbReference>
<dbReference type="GO" id="GO:0017148">
    <property type="term" value="P:negative regulation of translation"/>
    <property type="evidence" value="ECO:0007669"/>
    <property type="project" value="TreeGrafter"/>
</dbReference>
<dbReference type="GO" id="GO:0006412">
    <property type="term" value="P:translation"/>
    <property type="evidence" value="ECO:0007669"/>
    <property type="project" value="UniProtKB-UniRule"/>
</dbReference>
<dbReference type="CDD" id="cd00392">
    <property type="entry name" value="Ribosomal_L13"/>
    <property type="match status" value="1"/>
</dbReference>
<dbReference type="FunFam" id="3.90.1180.10:FF:000001">
    <property type="entry name" value="50S ribosomal protein L13"/>
    <property type="match status" value="1"/>
</dbReference>
<dbReference type="Gene3D" id="3.90.1180.10">
    <property type="entry name" value="Ribosomal protein L13"/>
    <property type="match status" value="1"/>
</dbReference>
<dbReference type="HAMAP" id="MF_01366">
    <property type="entry name" value="Ribosomal_uL13"/>
    <property type="match status" value="1"/>
</dbReference>
<dbReference type="InterPro" id="IPR005822">
    <property type="entry name" value="Ribosomal_uL13"/>
</dbReference>
<dbReference type="InterPro" id="IPR005823">
    <property type="entry name" value="Ribosomal_uL13_bac-type"/>
</dbReference>
<dbReference type="InterPro" id="IPR023563">
    <property type="entry name" value="Ribosomal_uL13_CS"/>
</dbReference>
<dbReference type="InterPro" id="IPR036899">
    <property type="entry name" value="Ribosomal_uL13_sf"/>
</dbReference>
<dbReference type="NCBIfam" id="TIGR01066">
    <property type="entry name" value="rplM_bact"/>
    <property type="match status" value="1"/>
</dbReference>
<dbReference type="PANTHER" id="PTHR11545:SF2">
    <property type="entry name" value="LARGE RIBOSOMAL SUBUNIT PROTEIN UL13M"/>
    <property type="match status" value="1"/>
</dbReference>
<dbReference type="PANTHER" id="PTHR11545">
    <property type="entry name" value="RIBOSOMAL PROTEIN L13"/>
    <property type="match status" value="1"/>
</dbReference>
<dbReference type="Pfam" id="PF00572">
    <property type="entry name" value="Ribosomal_L13"/>
    <property type="match status" value="1"/>
</dbReference>
<dbReference type="PIRSF" id="PIRSF002181">
    <property type="entry name" value="Ribosomal_L13"/>
    <property type="match status" value="1"/>
</dbReference>
<dbReference type="SUPFAM" id="SSF52161">
    <property type="entry name" value="Ribosomal protein L13"/>
    <property type="match status" value="1"/>
</dbReference>
<dbReference type="PROSITE" id="PS00783">
    <property type="entry name" value="RIBOSOMAL_L13"/>
    <property type="match status" value="1"/>
</dbReference>
<feature type="chain" id="PRO_1000055483" description="Large ribosomal subunit protein uL13">
    <location>
        <begin position="1"/>
        <end position="150"/>
    </location>
</feature>
<feature type="region of interest" description="Disordered" evidence="2">
    <location>
        <begin position="130"/>
        <end position="150"/>
    </location>
</feature>
<feature type="compositionally biased region" description="Polar residues" evidence="2">
    <location>
        <begin position="136"/>
        <end position="150"/>
    </location>
</feature>
<keyword id="KW-1185">Reference proteome</keyword>
<keyword id="KW-0687">Ribonucleoprotein</keyword>
<keyword id="KW-0689">Ribosomal protein</keyword>
<evidence type="ECO:0000255" key="1">
    <source>
        <dbReference type="HAMAP-Rule" id="MF_01366"/>
    </source>
</evidence>
<evidence type="ECO:0000256" key="2">
    <source>
        <dbReference type="SAM" id="MobiDB-lite"/>
    </source>
</evidence>
<evidence type="ECO:0000305" key="3"/>
<sequence length="150" mass="16748">MNKTVVPSLNTVERHWYVVDAENQCLGRLATEVASVLRGKNKPTYTPHLDTGDFVVVINADKVKVTGNKASDKLYRRHSGRPGGMKVETFAALQQRIPERIVEKAIKGMLPHNALGRQLFRKLKVYKGAEHPHGAQQPQPYQLNPSASIK</sequence>
<reference key="1">
    <citation type="submission" date="2006-05" db="EMBL/GenBank/DDBJ databases">
        <authorList>
            <consortium name="Genoscope"/>
        </authorList>
    </citation>
    <scope>NUCLEOTIDE SEQUENCE [LARGE SCALE GENOMIC DNA]</scope>
    <source>
        <strain>RCC307</strain>
    </source>
</reference>
<comment type="function">
    <text evidence="1">This protein is one of the early assembly proteins of the 50S ribosomal subunit, although it is not seen to bind rRNA by itself. It is important during the early stages of 50S assembly.</text>
</comment>
<comment type="subunit">
    <text evidence="1">Part of the 50S ribosomal subunit.</text>
</comment>
<comment type="similarity">
    <text evidence="1">Belongs to the universal ribosomal protein uL13 family.</text>
</comment>
<protein>
    <recommendedName>
        <fullName evidence="1">Large ribosomal subunit protein uL13</fullName>
    </recommendedName>
    <alternativeName>
        <fullName evidence="3">50S ribosomal protein L13</fullName>
    </alternativeName>
</protein>